<feature type="chain" id="PRO_0000200626" description="Protein Wnt-4">
    <location>
        <begin position="1" status="less than"/>
        <end position="119" status="greater than"/>
    </location>
</feature>
<feature type="lipid moiety-binding region" description="O-palmitoleoyl serine; by PORCN" evidence="4">
    <location>
        <position position="1"/>
    </location>
</feature>
<feature type="glycosylation site" description="N-linked (GlcNAc...) asparagine" evidence="5">
    <location>
        <position position="86"/>
    </location>
</feature>
<feature type="disulfide bond" evidence="3">
    <location>
        <begin position="69"/>
        <end position="100"/>
    </location>
</feature>
<feature type="disulfide bond" evidence="3">
    <location>
        <begin position="85"/>
        <end position="95"/>
    </location>
</feature>
<feature type="non-terminal residue">
    <location>
        <position position="1"/>
    </location>
</feature>
<feature type="non-terminal residue">
    <location>
        <position position="119"/>
    </location>
</feature>
<reference key="1">
    <citation type="journal article" date="1992" name="Proc. Natl. Acad. Sci. U.S.A.">
        <title>Diversification of the Wnt gene family on the ancestral lineage of vertebrates.</title>
        <authorList>
            <person name="Sidow A."/>
        </authorList>
    </citation>
    <scope>NUCLEOTIDE SEQUENCE [GENOMIC DNA]</scope>
</reference>
<comment type="function">
    <text evidence="1 6">Ligand for members of the frizzled family of seven transmembrane receptors (Probable). Plays an important role in embryonic development (By similarity).</text>
</comment>
<comment type="subcellular location">
    <subcellularLocation>
        <location>Secreted</location>
        <location>Extracellular space</location>
        <location>Extracellular matrix</location>
    </subcellularLocation>
</comment>
<comment type="PTM">
    <text evidence="2 4">Palmitoleoylation is required for efficient binding to frizzled receptors. Depalmitoleoylation leads to Wnt signaling pathway inhibition.</text>
</comment>
<comment type="similarity">
    <text evidence="6">Belongs to the Wnt family.</text>
</comment>
<gene>
    <name type="primary">WNT-4</name>
</gene>
<accession>P28143</accession>
<keyword id="KW-0217">Developmental protein</keyword>
<keyword id="KW-1015">Disulfide bond</keyword>
<keyword id="KW-0272">Extracellular matrix</keyword>
<keyword id="KW-0325">Glycoprotein</keyword>
<keyword id="KW-0449">Lipoprotein</keyword>
<keyword id="KW-0964">Secreted</keyword>
<keyword id="KW-0879">Wnt signaling pathway</keyword>
<name>WNT4_SCEOC</name>
<evidence type="ECO:0000250" key="1">
    <source>
        <dbReference type="UniProtKB" id="P22724"/>
    </source>
</evidence>
<evidence type="ECO:0000250" key="2">
    <source>
        <dbReference type="UniProtKB" id="P27467"/>
    </source>
</evidence>
<evidence type="ECO:0000250" key="3">
    <source>
        <dbReference type="UniProtKB" id="P28026"/>
    </source>
</evidence>
<evidence type="ECO:0000250" key="4">
    <source>
        <dbReference type="UniProtKB" id="P56704"/>
    </source>
</evidence>
<evidence type="ECO:0000255" key="5"/>
<evidence type="ECO:0000305" key="6"/>
<organism>
    <name type="scientific">Sceloporus occidentalis</name>
    <name type="common">Western fence lizard</name>
    <dbReference type="NCBI Taxonomy" id="8519"/>
    <lineage>
        <taxon>Eukaryota</taxon>
        <taxon>Metazoa</taxon>
        <taxon>Chordata</taxon>
        <taxon>Craniata</taxon>
        <taxon>Vertebrata</taxon>
        <taxon>Euteleostomi</taxon>
        <taxon>Lepidosauria</taxon>
        <taxon>Squamata</taxon>
        <taxon>Bifurcata</taxon>
        <taxon>Unidentata</taxon>
        <taxon>Episquamata</taxon>
        <taxon>Toxicofera</taxon>
        <taxon>Iguania</taxon>
        <taxon>Phrynosomatidae</taxon>
        <taxon>Phrynosomatinae</taxon>
        <taxon>Sceloporus</taxon>
    </lineage>
</organism>
<proteinExistence type="inferred from homology"/>
<sequence length="119" mass="13205">SGSCEVKTCWKAMPPFRKVGNVLKEKFDGATEVEQRKTGSTKVLVPKNSQFKPHTDEDLVYLDSSPDFCDHDLKNGVLGTSGRHCNKTSKAIDGCELMCCGRGFHTDEVEVVERCSCKF</sequence>
<protein>
    <recommendedName>
        <fullName>Protein Wnt-4</fullName>
    </recommendedName>
</protein>
<dbReference type="EMBL" id="M91300">
    <property type="protein sequence ID" value="AAA49543.1"/>
    <property type="molecule type" value="Genomic_DNA"/>
</dbReference>
<dbReference type="SMR" id="P28143"/>
<dbReference type="GlyCosmos" id="P28143">
    <property type="glycosylation" value="1 site, No reported glycans"/>
</dbReference>
<dbReference type="GO" id="GO:0005615">
    <property type="term" value="C:extracellular space"/>
    <property type="evidence" value="ECO:0007669"/>
    <property type="project" value="TreeGrafter"/>
</dbReference>
<dbReference type="GO" id="GO:0005125">
    <property type="term" value="F:cytokine activity"/>
    <property type="evidence" value="ECO:0007669"/>
    <property type="project" value="TreeGrafter"/>
</dbReference>
<dbReference type="GO" id="GO:0005109">
    <property type="term" value="F:frizzled binding"/>
    <property type="evidence" value="ECO:0007669"/>
    <property type="project" value="TreeGrafter"/>
</dbReference>
<dbReference type="GO" id="GO:0060070">
    <property type="term" value="P:canonical Wnt signaling pathway"/>
    <property type="evidence" value="ECO:0007669"/>
    <property type="project" value="TreeGrafter"/>
</dbReference>
<dbReference type="GO" id="GO:0045165">
    <property type="term" value="P:cell fate commitment"/>
    <property type="evidence" value="ECO:0007669"/>
    <property type="project" value="TreeGrafter"/>
</dbReference>
<dbReference type="GO" id="GO:0030182">
    <property type="term" value="P:neuron differentiation"/>
    <property type="evidence" value="ECO:0007669"/>
    <property type="project" value="TreeGrafter"/>
</dbReference>
<dbReference type="FunFam" id="3.30.2460.20:FF:000008">
    <property type="entry name" value="Protein Wnt-4"/>
    <property type="match status" value="1"/>
</dbReference>
<dbReference type="Gene3D" id="3.30.2460.20">
    <property type="match status" value="1"/>
</dbReference>
<dbReference type="InterPro" id="IPR005817">
    <property type="entry name" value="Wnt"/>
</dbReference>
<dbReference type="InterPro" id="IPR043158">
    <property type="entry name" value="Wnt_C"/>
</dbReference>
<dbReference type="PANTHER" id="PTHR12027:SF101">
    <property type="entry name" value="PROTEIN WNT-4"/>
    <property type="match status" value="1"/>
</dbReference>
<dbReference type="PANTHER" id="PTHR12027">
    <property type="entry name" value="WNT RELATED"/>
    <property type="match status" value="1"/>
</dbReference>
<dbReference type="Pfam" id="PF00110">
    <property type="entry name" value="wnt"/>
    <property type="match status" value="1"/>
</dbReference>
<dbReference type="SMART" id="SM00097">
    <property type="entry name" value="WNT1"/>
    <property type="match status" value="1"/>
</dbReference>